<name>ERPA_CROS8</name>
<reference key="1">
    <citation type="journal article" date="2010" name="PLoS ONE">
        <title>Genome sequence of Cronobacter sakazakii BAA-894 and comparative genomic hybridization analysis with other Cronobacter species.</title>
        <authorList>
            <person name="Kucerova E."/>
            <person name="Clifton S.W."/>
            <person name="Xia X.Q."/>
            <person name="Long F."/>
            <person name="Porwollik S."/>
            <person name="Fulton L."/>
            <person name="Fronick C."/>
            <person name="Minx P."/>
            <person name="Kyung K."/>
            <person name="Warren W."/>
            <person name="Fulton R."/>
            <person name="Feng D."/>
            <person name="Wollam A."/>
            <person name="Shah N."/>
            <person name="Bhonagiri V."/>
            <person name="Nash W.E."/>
            <person name="Hallsworth-Pepin K."/>
            <person name="Wilson R.K."/>
            <person name="McClelland M."/>
            <person name="Forsythe S.J."/>
        </authorList>
    </citation>
    <scope>NUCLEOTIDE SEQUENCE [LARGE SCALE GENOMIC DNA]</scope>
    <source>
        <strain>ATCC BAA-894</strain>
    </source>
</reference>
<comment type="function">
    <text evidence="1">Required for insertion of 4Fe-4S clusters for at least IspG.</text>
</comment>
<comment type="cofactor">
    <cofactor evidence="1">
        <name>iron-sulfur cluster</name>
        <dbReference type="ChEBI" id="CHEBI:30408"/>
    </cofactor>
    <text evidence="1">Binds 1 iron-sulfur cluster per subunit.</text>
</comment>
<comment type="subunit">
    <text evidence="1">Homodimer.</text>
</comment>
<comment type="similarity">
    <text evidence="1">Belongs to the HesB/IscA family.</text>
</comment>
<evidence type="ECO:0000255" key="1">
    <source>
        <dbReference type="HAMAP-Rule" id="MF_01380"/>
    </source>
</evidence>
<feature type="chain" id="PRO_0000311476" description="Iron-sulfur cluster insertion protein ErpA">
    <location>
        <begin position="1"/>
        <end position="114"/>
    </location>
</feature>
<feature type="binding site" evidence="1">
    <location>
        <position position="42"/>
    </location>
    <ligand>
        <name>iron-sulfur cluster</name>
        <dbReference type="ChEBI" id="CHEBI:30408"/>
    </ligand>
</feature>
<feature type="binding site" evidence="1">
    <location>
        <position position="106"/>
    </location>
    <ligand>
        <name>iron-sulfur cluster</name>
        <dbReference type="ChEBI" id="CHEBI:30408"/>
    </ligand>
</feature>
<feature type="binding site" evidence="1">
    <location>
        <position position="108"/>
    </location>
    <ligand>
        <name>iron-sulfur cluster</name>
        <dbReference type="ChEBI" id="CHEBI:30408"/>
    </ligand>
</feature>
<sequence>MSDDVALPLQFTDAAANKVKSLIADEDNPNLKLRVYITGGGCSGFQYGFTFDDQINDGDMTIEKQGVSLVVDPMSLQYLVGGAVDYTEGLEGSRFVVNNPNATSTCGCGSSFSI</sequence>
<organism>
    <name type="scientific">Cronobacter sakazakii (strain ATCC BAA-894)</name>
    <name type="common">Enterobacter sakazakii</name>
    <dbReference type="NCBI Taxonomy" id="290339"/>
    <lineage>
        <taxon>Bacteria</taxon>
        <taxon>Pseudomonadati</taxon>
        <taxon>Pseudomonadota</taxon>
        <taxon>Gammaproteobacteria</taxon>
        <taxon>Enterobacterales</taxon>
        <taxon>Enterobacteriaceae</taxon>
        <taxon>Cronobacter</taxon>
    </lineage>
</organism>
<proteinExistence type="inferred from homology"/>
<keyword id="KW-0408">Iron</keyword>
<keyword id="KW-0411">Iron-sulfur</keyword>
<keyword id="KW-0479">Metal-binding</keyword>
<keyword id="KW-1185">Reference proteome</keyword>
<gene>
    <name evidence="1" type="primary">erpA</name>
    <name type="ordered locus">ESA_03184</name>
</gene>
<dbReference type="EMBL" id="CP000783">
    <property type="protein sequence ID" value="ABU78406.1"/>
    <property type="molecule type" value="Genomic_DNA"/>
</dbReference>
<dbReference type="RefSeq" id="WP_004386149.1">
    <property type="nucleotide sequence ID" value="NC_009778.1"/>
</dbReference>
<dbReference type="SMR" id="A7MGR3"/>
<dbReference type="GeneID" id="92807616"/>
<dbReference type="KEGG" id="esa:ESA_03184"/>
<dbReference type="HOGENOM" id="CLU_069054_5_3_6"/>
<dbReference type="Proteomes" id="UP000000260">
    <property type="component" value="Chromosome"/>
</dbReference>
<dbReference type="GO" id="GO:0005829">
    <property type="term" value="C:cytosol"/>
    <property type="evidence" value="ECO:0007669"/>
    <property type="project" value="TreeGrafter"/>
</dbReference>
<dbReference type="GO" id="GO:0051537">
    <property type="term" value="F:2 iron, 2 sulfur cluster binding"/>
    <property type="evidence" value="ECO:0007669"/>
    <property type="project" value="TreeGrafter"/>
</dbReference>
<dbReference type="GO" id="GO:0051539">
    <property type="term" value="F:4 iron, 4 sulfur cluster binding"/>
    <property type="evidence" value="ECO:0007669"/>
    <property type="project" value="TreeGrafter"/>
</dbReference>
<dbReference type="GO" id="GO:0005506">
    <property type="term" value="F:iron ion binding"/>
    <property type="evidence" value="ECO:0007669"/>
    <property type="project" value="UniProtKB-UniRule"/>
</dbReference>
<dbReference type="GO" id="GO:0016226">
    <property type="term" value="P:iron-sulfur cluster assembly"/>
    <property type="evidence" value="ECO:0007669"/>
    <property type="project" value="UniProtKB-UniRule"/>
</dbReference>
<dbReference type="FunFam" id="2.60.300.12:FF:000002">
    <property type="entry name" value="Iron-sulfur cluster insertion protein ErpA"/>
    <property type="match status" value="1"/>
</dbReference>
<dbReference type="Gene3D" id="2.60.300.12">
    <property type="entry name" value="HesB-like domain"/>
    <property type="match status" value="1"/>
</dbReference>
<dbReference type="HAMAP" id="MF_01380">
    <property type="entry name" value="Fe_S_insert_ErpA"/>
    <property type="match status" value="1"/>
</dbReference>
<dbReference type="InterPro" id="IPR000361">
    <property type="entry name" value="FeS_biogenesis"/>
</dbReference>
<dbReference type="InterPro" id="IPR016092">
    <property type="entry name" value="FeS_cluster_insertion"/>
</dbReference>
<dbReference type="InterPro" id="IPR017870">
    <property type="entry name" value="FeS_cluster_insertion_CS"/>
</dbReference>
<dbReference type="InterPro" id="IPR023063">
    <property type="entry name" value="FeS_cluster_insertion_RrpA"/>
</dbReference>
<dbReference type="InterPro" id="IPR035903">
    <property type="entry name" value="HesB-like_dom_sf"/>
</dbReference>
<dbReference type="NCBIfam" id="TIGR00049">
    <property type="entry name" value="iron-sulfur cluster assembly accessory protein"/>
    <property type="match status" value="1"/>
</dbReference>
<dbReference type="NCBIfam" id="NF010147">
    <property type="entry name" value="PRK13623.1"/>
    <property type="match status" value="1"/>
</dbReference>
<dbReference type="PANTHER" id="PTHR43011">
    <property type="entry name" value="IRON-SULFUR CLUSTER ASSEMBLY 2 HOMOLOG, MITOCHONDRIAL"/>
    <property type="match status" value="1"/>
</dbReference>
<dbReference type="PANTHER" id="PTHR43011:SF1">
    <property type="entry name" value="IRON-SULFUR CLUSTER ASSEMBLY 2 HOMOLOG, MITOCHONDRIAL"/>
    <property type="match status" value="1"/>
</dbReference>
<dbReference type="Pfam" id="PF01521">
    <property type="entry name" value="Fe-S_biosyn"/>
    <property type="match status" value="1"/>
</dbReference>
<dbReference type="SUPFAM" id="SSF89360">
    <property type="entry name" value="HesB-like domain"/>
    <property type="match status" value="1"/>
</dbReference>
<dbReference type="PROSITE" id="PS01152">
    <property type="entry name" value="HESB"/>
    <property type="match status" value="1"/>
</dbReference>
<accession>A7MGR3</accession>
<protein>
    <recommendedName>
        <fullName evidence="1">Iron-sulfur cluster insertion protein ErpA</fullName>
    </recommendedName>
</protein>